<organism>
    <name type="scientific">Aeropyrum pernix (strain ATCC 700893 / DSM 11879 / JCM 9820 / NBRC 100138 / K1)</name>
    <dbReference type="NCBI Taxonomy" id="272557"/>
    <lineage>
        <taxon>Archaea</taxon>
        <taxon>Thermoproteota</taxon>
        <taxon>Thermoprotei</taxon>
        <taxon>Desulfurococcales</taxon>
        <taxon>Desulfurococcaceae</taxon>
        <taxon>Aeropyrum</taxon>
    </lineage>
</organism>
<reference key="1">
    <citation type="journal article" date="1999" name="DNA Res.">
        <title>Complete genome sequence of an aerobic hyper-thermophilic crenarchaeon, Aeropyrum pernix K1.</title>
        <authorList>
            <person name="Kawarabayasi Y."/>
            <person name="Hino Y."/>
            <person name="Horikawa H."/>
            <person name="Yamazaki S."/>
            <person name="Haikawa Y."/>
            <person name="Jin-no K."/>
            <person name="Takahashi M."/>
            <person name="Sekine M."/>
            <person name="Baba S."/>
            <person name="Ankai A."/>
            <person name="Kosugi H."/>
            <person name="Hosoyama A."/>
            <person name="Fukui S."/>
            <person name="Nagai Y."/>
            <person name="Nishijima K."/>
            <person name="Nakazawa H."/>
            <person name="Takamiya M."/>
            <person name="Masuda S."/>
            <person name="Funahashi T."/>
            <person name="Tanaka T."/>
            <person name="Kudoh Y."/>
            <person name="Yamazaki J."/>
            <person name="Kushida N."/>
            <person name="Oguchi A."/>
            <person name="Aoki K."/>
            <person name="Kubota K."/>
            <person name="Nakamura Y."/>
            <person name="Nomura N."/>
            <person name="Sako Y."/>
            <person name="Kikuchi H."/>
        </authorList>
    </citation>
    <scope>NUCLEOTIDE SEQUENCE [LARGE SCALE GENOMIC DNA]</scope>
    <source>
        <strain>ATCC 700893 / DSM 11879 / JCM 9820 / NBRC 100138 / K1</strain>
    </source>
</reference>
<proteinExistence type="inferred from homology"/>
<comment type="function">
    <text evidence="1">One of the primary rRNA binding proteins, it binds directly to 16S rRNA where it nucleates assembly of the body of the 30S subunit.</text>
</comment>
<comment type="function">
    <text evidence="1">With S5 and S12 plays an important role in translational accuracy.</text>
</comment>
<comment type="subunit">
    <text evidence="1">Part of the 30S ribosomal subunit. Contacts protein S5. The interaction surface between S4 and S5 is involved in control of translational fidelity.</text>
</comment>
<comment type="similarity">
    <text evidence="1">Belongs to the universal ribosomal protein uS4 family.</text>
</comment>
<dbReference type="EMBL" id="BA000002">
    <property type="protein sequence ID" value="BAA80740.2"/>
    <property type="molecule type" value="Genomic_DNA"/>
</dbReference>
<dbReference type="PIR" id="G72556">
    <property type="entry name" value="G72556"/>
</dbReference>
<dbReference type="RefSeq" id="WP_010866565.1">
    <property type="nucleotide sequence ID" value="NC_000854.2"/>
</dbReference>
<dbReference type="SMR" id="Q9YB58"/>
<dbReference type="STRING" id="272557.APE_1739.1"/>
<dbReference type="EnsemblBacteria" id="BAA80740">
    <property type="protein sequence ID" value="BAA80740"/>
    <property type="gene ID" value="APE_1739.1"/>
</dbReference>
<dbReference type="GeneID" id="1446209"/>
<dbReference type="KEGG" id="ape:APE_1739.1"/>
<dbReference type="PATRIC" id="fig|272557.25.peg.1170"/>
<dbReference type="eggNOG" id="arCOG04239">
    <property type="taxonomic scope" value="Archaea"/>
</dbReference>
<dbReference type="Proteomes" id="UP000002518">
    <property type="component" value="Chromosome"/>
</dbReference>
<dbReference type="GO" id="GO:0015935">
    <property type="term" value="C:small ribosomal subunit"/>
    <property type="evidence" value="ECO:0007669"/>
    <property type="project" value="InterPro"/>
</dbReference>
<dbReference type="GO" id="GO:0019843">
    <property type="term" value="F:rRNA binding"/>
    <property type="evidence" value="ECO:0007669"/>
    <property type="project" value="UniProtKB-UniRule"/>
</dbReference>
<dbReference type="GO" id="GO:0003735">
    <property type="term" value="F:structural constituent of ribosome"/>
    <property type="evidence" value="ECO:0007669"/>
    <property type="project" value="InterPro"/>
</dbReference>
<dbReference type="GO" id="GO:0042274">
    <property type="term" value="P:ribosomal small subunit biogenesis"/>
    <property type="evidence" value="ECO:0007669"/>
    <property type="project" value="TreeGrafter"/>
</dbReference>
<dbReference type="GO" id="GO:0006412">
    <property type="term" value="P:translation"/>
    <property type="evidence" value="ECO:0007669"/>
    <property type="project" value="UniProtKB-UniRule"/>
</dbReference>
<dbReference type="CDD" id="cd00165">
    <property type="entry name" value="S4"/>
    <property type="match status" value="1"/>
</dbReference>
<dbReference type="Gene3D" id="3.10.290.10">
    <property type="entry name" value="RNA-binding S4 domain"/>
    <property type="match status" value="1"/>
</dbReference>
<dbReference type="HAMAP" id="MF_01306_A">
    <property type="entry name" value="Ribosomal_uS4_A"/>
    <property type="match status" value="1"/>
</dbReference>
<dbReference type="InterPro" id="IPR022801">
    <property type="entry name" value="Ribosomal_uS4"/>
</dbReference>
<dbReference type="InterPro" id="IPR022802">
    <property type="entry name" value="Ribosomal_uS4_arc"/>
</dbReference>
<dbReference type="InterPro" id="IPR018079">
    <property type="entry name" value="Ribosomal_uS4_CS"/>
</dbReference>
<dbReference type="InterPro" id="IPR005710">
    <property type="entry name" value="Ribosomal_uS4_euk/arc"/>
</dbReference>
<dbReference type="InterPro" id="IPR001912">
    <property type="entry name" value="Ribosomal_uS4_N"/>
</dbReference>
<dbReference type="InterPro" id="IPR002942">
    <property type="entry name" value="S4_RNA-bd"/>
</dbReference>
<dbReference type="InterPro" id="IPR036986">
    <property type="entry name" value="S4_RNA-bd_sf"/>
</dbReference>
<dbReference type="NCBIfam" id="NF003139">
    <property type="entry name" value="PRK04051.1"/>
    <property type="match status" value="1"/>
</dbReference>
<dbReference type="NCBIfam" id="TIGR01018">
    <property type="entry name" value="uS4_arch"/>
    <property type="match status" value="1"/>
</dbReference>
<dbReference type="PANTHER" id="PTHR11831">
    <property type="entry name" value="30S 40S RIBOSOMAL PROTEIN"/>
    <property type="match status" value="1"/>
</dbReference>
<dbReference type="PANTHER" id="PTHR11831:SF5">
    <property type="entry name" value="40S RIBOSOMAL PROTEIN S9"/>
    <property type="match status" value="1"/>
</dbReference>
<dbReference type="Pfam" id="PF00163">
    <property type="entry name" value="Ribosomal_S4"/>
    <property type="match status" value="1"/>
</dbReference>
<dbReference type="Pfam" id="PF01479">
    <property type="entry name" value="S4"/>
    <property type="match status" value="1"/>
</dbReference>
<dbReference type="SMART" id="SM01390">
    <property type="entry name" value="Ribosomal_S4"/>
    <property type="match status" value="1"/>
</dbReference>
<dbReference type="SMART" id="SM00363">
    <property type="entry name" value="S4"/>
    <property type="match status" value="1"/>
</dbReference>
<dbReference type="SUPFAM" id="SSF55174">
    <property type="entry name" value="Alpha-L RNA-binding motif"/>
    <property type="match status" value="1"/>
</dbReference>
<dbReference type="PROSITE" id="PS00632">
    <property type="entry name" value="RIBOSOMAL_S4"/>
    <property type="match status" value="1"/>
</dbReference>
<dbReference type="PROSITE" id="PS50889">
    <property type="entry name" value="S4"/>
    <property type="match status" value="1"/>
</dbReference>
<accession>Q9YB58</accession>
<name>RS4_AERPE</name>
<evidence type="ECO:0000255" key="1">
    <source>
        <dbReference type="HAMAP-Rule" id="MF_01306"/>
    </source>
</evidence>
<evidence type="ECO:0000305" key="2"/>
<keyword id="KW-1185">Reference proteome</keyword>
<keyword id="KW-0687">Ribonucleoprotein</keyword>
<keyword id="KW-0689">Ribosomal protein</keyword>
<keyword id="KW-0694">RNA-binding</keyword>
<keyword id="KW-0699">rRNA-binding</keyword>
<gene>
    <name evidence="1" type="primary">rps4</name>
    <name type="ordered locus">APE_1739.1</name>
</gene>
<protein>
    <recommendedName>
        <fullName evidence="1">Small ribosomal subunit protein uS4</fullName>
    </recommendedName>
    <alternativeName>
        <fullName evidence="2">30S ribosomal protein S4</fullName>
    </alternativeName>
</protein>
<feature type="chain" id="PRO_0000132503" description="Small ribosomal subunit protein uS4">
    <location>
        <begin position="1"/>
        <end position="171"/>
    </location>
</feature>
<feature type="domain" description="S4 RNA-binding" evidence="1">
    <location>
        <begin position="104"/>
        <end position="168"/>
    </location>
</feature>
<sequence length="171" mass="19900">MGDPRKPRKKWEGPKHPWIKERLERERELMGRYGLRNKKELWKAETLARRFRHRARSLLGLPPEVRREASRVLVESLYRMGLIDNPNVDIDEVLGINAEKVLERRLQTIVYKKGLAKTIYQARQLVVHGHIAIAGRRVTSPGYLVSREEEKLIDYAPGSPFKERAEEAAQA</sequence>